<organism>
    <name type="scientific">Escherichia coli (strain K12 / MC4100 / BW2952)</name>
    <dbReference type="NCBI Taxonomy" id="595496"/>
    <lineage>
        <taxon>Bacteria</taxon>
        <taxon>Pseudomonadati</taxon>
        <taxon>Pseudomonadota</taxon>
        <taxon>Gammaproteobacteria</taxon>
        <taxon>Enterobacterales</taxon>
        <taxon>Enterobacteriaceae</taxon>
        <taxon>Escherichia</taxon>
    </lineage>
</organism>
<dbReference type="EMBL" id="CP001396">
    <property type="protein sequence ID" value="ACR62840.1"/>
    <property type="molecule type" value="Genomic_DNA"/>
</dbReference>
<dbReference type="RefSeq" id="WP_001309187.1">
    <property type="nucleotide sequence ID" value="NC_012759.1"/>
</dbReference>
<dbReference type="SMR" id="C4ZT14"/>
<dbReference type="KEGG" id="ebw:BWG_4024"/>
<dbReference type="HOGENOM" id="CLU_1977621_0_0_6"/>
<dbReference type="GO" id="GO:0005737">
    <property type="term" value="C:cytoplasm"/>
    <property type="evidence" value="ECO:0007669"/>
    <property type="project" value="UniProtKB-SubCell"/>
</dbReference>
<dbReference type="GO" id="GO:0043856">
    <property type="term" value="F:anti-sigma factor antagonist activity"/>
    <property type="evidence" value="ECO:0007669"/>
    <property type="project" value="InterPro"/>
</dbReference>
<dbReference type="GO" id="GO:0034599">
    <property type="term" value="P:cellular response to oxidative stress"/>
    <property type="evidence" value="ECO:0007669"/>
    <property type="project" value="UniProtKB-UniRule"/>
</dbReference>
<dbReference type="GO" id="GO:0006974">
    <property type="term" value="P:DNA damage response"/>
    <property type="evidence" value="ECO:0007669"/>
    <property type="project" value="InterPro"/>
</dbReference>
<dbReference type="HAMAP" id="MF_02010">
    <property type="entry name" value="IraD"/>
    <property type="match status" value="1"/>
</dbReference>
<dbReference type="InterPro" id="IPR023776">
    <property type="entry name" value="Anti-adapt_IraD"/>
</dbReference>
<dbReference type="InterPro" id="IPR007048">
    <property type="entry name" value="IraD/Gp25-like"/>
</dbReference>
<dbReference type="NCBIfam" id="NF010726">
    <property type="entry name" value="PRK14128.1-1"/>
    <property type="match status" value="1"/>
</dbReference>
<dbReference type="NCBIfam" id="NF010728">
    <property type="entry name" value="PRK14128.1-3"/>
    <property type="match status" value="1"/>
</dbReference>
<dbReference type="Pfam" id="PF04965">
    <property type="entry name" value="GPW_gp25"/>
    <property type="match status" value="1"/>
</dbReference>
<dbReference type="SUPFAM" id="SSF160719">
    <property type="entry name" value="gpW/gp25-like"/>
    <property type="match status" value="1"/>
</dbReference>
<gene>
    <name evidence="1" type="primary">iraD</name>
    <name type="ordered locus">BWG_4024</name>
</gene>
<protein>
    <recommendedName>
        <fullName evidence="1">Anti-adapter protein IraD</fullName>
    </recommendedName>
</protein>
<accession>C4ZT14</accession>
<feature type="chain" id="PRO_1000216408" description="Anti-adapter protein IraD">
    <location>
        <begin position="1"/>
        <end position="130"/>
    </location>
</feature>
<proteinExistence type="inferred from homology"/>
<reference key="1">
    <citation type="journal article" date="2009" name="J. Bacteriol.">
        <title>Genomic sequencing reveals regulatory mutations and recombinational events in the widely used MC4100 lineage of Escherichia coli K-12.</title>
        <authorList>
            <person name="Ferenci T."/>
            <person name="Zhou Z."/>
            <person name="Betteridge T."/>
            <person name="Ren Y."/>
            <person name="Liu Y."/>
            <person name="Feng L."/>
            <person name="Reeves P.R."/>
            <person name="Wang L."/>
        </authorList>
    </citation>
    <scope>NUCLEOTIDE SEQUENCE [LARGE SCALE GENOMIC DNA]</scope>
    <source>
        <strain>K12 / MC4100 / BW2952</strain>
    </source>
</reference>
<keyword id="KW-0963">Cytoplasm</keyword>
<keyword id="KW-0346">Stress response</keyword>
<evidence type="ECO:0000255" key="1">
    <source>
        <dbReference type="HAMAP-Rule" id="MF_02010"/>
    </source>
</evidence>
<comment type="function">
    <text evidence="1">Inhibits RpoS proteolysis by regulating RssB activity, thereby increasing the stability of the sigma stress factor RpoS during oxidative stress. Its effect on RpoS stability is due to its interaction with RssB, which probably blocks the interaction of RssB with RpoS, and the consequent delivery of the RssB-RpoS complex to the ClpXP protein degradation pathway.</text>
</comment>
<comment type="subunit">
    <text evidence="1">Interacts with RssB.</text>
</comment>
<comment type="subcellular location">
    <subcellularLocation>
        <location evidence="1">Cytoplasm</location>
    </subcellularLocation>
</comment>
<comment type="similarity">
    <text evidence="1">Belongs to the GpW/Gp25 family. IraD subfamily.</text>
</comment>
<sequence length="130" mass="14747">MMRQSLQAVLPEISGNKTSSLRKSVCSDLLTLFNSPHSALPSLLVSGMPEWQVHNPSDKHLQSWYCRQLRSALLFHEPRIAALQVNLKEAYCHTLAISLEIMLYHDDEPLTFDLVWDNGGWRSATLENVS</sequence>
<name>IRAD_ECOBW</name>